<comment type="function">
    <text evidence="1">One of the primary rRNA binding proteins, it binds specifically to the 5'-end of 16S ribosomal RNA.</text>
</comment>
<comment type="subunit">
    <text evidence="1">Part of the 30S ribosomal subunit.</text>
</comment>
<comment type="similarity">
    <text evidence="1">Belongs to the universal ribosomal protein uS17 family.</text>
</comment>
<proteinExistence type="inferred from homology"/>
<accession>B3PWT0</accession>
<protein>
    <recommendedName>
        <fullName evidence="1">Small ribosomal subunit protein uS17</fullName>
    </recommendedName>
    <alternativeName>
        <fullName evidence="2">30S ribosomal protein S17</fullName>
    </alternativeName>
</protein>
<gene>
    <name evidence="1" type="primary">rpsQ</name>
    <name type="ordered locus">RHECIAT_CH0001758</name>
</gene>
<keyword id="KW-0687">Ribonucleoprotein</keyword>
<keyword id="KW-0689">Ribosomal protein</keyword>
<keyword id="KW-0694">RNA-binding</keyword>
<keyword id="KW-0699">rRNA-binding</keyword>
<dbReference type="EMBL" id="CP001074">
    <property type="protein sequence ID" value="ACE90728.1"/>
    <property type="molecule type" value="Genomic_DNA"/>
</dbReference>
<dbReference type="SMR" id="B3PWT0"/>
<dbReference type="KEGG" id="rec:RHECIAT_CH0001758"/>
<dbReference type="eggNOG" id="COG0186">
    <property type="taxonomic scope" value="Bacteria"/>
</dbReference>
<dbReference type="HOGENOM" id="CLU_073626_1_1_5"/>
<dbReference type="Proteomes" id="UP000008817">
    <property type="component" value="Chromosome"/>
</dbReference>
<dbReference type="GO" id="GO:0022627">
    <property type="term" value="C:cytosolic small ribosomal subunit"/>
    <property type="evidence" value="ECO:0007669"/>
    <property type="project" value="TreeGrafter"/>
</dbReference>
<dbReference type="GO" id="GO:0019843">
    <property type="term" value="F:rRNA binding"/>
    <property type="evidence" value="ECO:0007669"/>
    <property type="project" value="UniProtKB-UniRule"/>
</dbReference>
<dbReference type="GO" id="GO:0003735">
    <property type="term" value="F:structural constituent of ribosome"/>
    <property type="evidence" value="ECO:0007669"/>
    <property type="project" value="InterPro"/>
</dbReference>
<dbReference type="GO" id="GO:0006412">
    <property type="term" value="P:translation"/>
    <property type="evidence" value="ECO:0007669"/>
    <property type="project" value="UniProtKB-UniRule"/>
</dbReference>
<dbReference type="CDD" id="cd00364">
    <property type="entry name" value="Ribosomal_uS17"/>
    <property type="match status" value="1"/>
</dbReference>
<dbReference type="Gene3D" id="2.40.50.140">
    <property type="entry name" value="Nucleic acid-binding proteins"/>
    <property type="match status" value="1"/>
</dbReference>
<dbReference type="HAMAP" id="MF_01345_B">
    <property type="entry name" value="Ribosomal_uS17_B"/>
    <property type="match status" value="1"/>
</dbReference>
<dbReference type="InterPro" id="IPR012340">
    <property type="entry name" value="NA-bd_OB-fold"/>
</dbReference>
<dbReference type="InterPro" id="IPR000266">
    <property type="entry name" value="Ribosomal_uS17"/>
</dbReference>
<dbReference type="InterPro" id="IPR019984">
    <property type="entry name" value="Ribosomal_uS17_bact/chlr"/>
</dbReference>
<dbReference type="NCBIfam" id="NF004123">
    <property type="entry name" value="PRK05610.1"/>
    <property type="match status" value="1"/>
</dbReference>
<dbReference type="NCBIfam" id="TIGR03635">
    <property type="entry name" value="uS17_bact"/>
    <property type="match status" value="1"/>
</dbReference>
<dbReference type="PANTHER" id="PTHR10744">
    <property type="entry name" value="40S RIBOSOMAL PROTEIN S11 FAMILY MEMBER"/>
    <property type="match status" value="1"/>
</dbReference>
<dbReference type="PANTHER" id="PTHR10744:SF1">
    <property type="entry name" value="SMALL RIBOSOMAL SUBUNIT PROTEIN US17M"/>
    <property type="match status" value="1"/>
</dbReference>
<dbReference type="Pfam" id="PF00366">
    <property type="entry name" value="Ribosomal_S17"/>
    <property type="match status" value="1"/>
</dbReference>
<dbReference type="PRINTS" id="PR00973">
    <property type="entry name" value="RIBOSOMALS17"/>
</dbReference>
<dbReference type="SUPFAM" id="SSF50249">
    <property type="entry name" value="Nucleic acid-binding proteins"/>
    <property type="match status" value="1"/>
</dbReference>
<evidence type="ECO:0000255" key="1">
    <source>
        <dbReference type="HAMAP-Rule" id="MF_01345"/>
    </source>
</evidence>
<evidence type="ECO:0000305" key="2"/>
<name>RS17_RHIE6</name>
<organism>
    <name type="scientific">Rhizobium etli (strain CIAT 652)</name>
    <dbReference type="NCBI Taxonomy" id="491916"/>
    <lineage>
        <taxon>Bacteria</taxon>
        <taxon>Pseudomonadati</taxon>
        <taxon>Pseudomonadota</taxon>
        <taxon>Alphaproteobacteria</taxon>
        <taxon>Hyphomicrobiales</taxon>
        <taxon>Rhizobiaceae</taxon>
        <taxon>Rhizobium/Agrobacterium group</taxon>
        <taxon>Rhizobium</taxon>
    </lineage>
</organism>
<sequence>MPKRILQGVVVGDKNEKTVVVRVERRFAHPLLQKTVRRSKKYKAHDENNQYKIGDTVSIEECAPISKDKRWTVIAAQGK</sequence>
<reference key="1">
    <citation type="journal article" date="2010" name="Appl. Environ. Microbiol.">
        <title>Conserved symbiotic plasmid DNA sequences in the multireplicon pangenomic structure of Rhizobium etli.</title>
        <authorList>
            <person name="Gonzalez V."/>
            <person name="Acosta J.L."/>
            <person name="Santamaria R.I."/>
            <person name="Bustos P."/>
            <person name="Fernandez J.L."/>
            <person name="Hernandez Gonzalez I.L."/>
            <person name="Diaz R."/>
            <person name="Flores M."/>
            <person name="Palacios R."/>
            <person name="Mora J."/>
            <person name="Davila G."/>
        </authorList>
    </citation>
    <scope>NUCLEOTIDE SEQUENCE [LARGE SCALE GENOMIC DNA]</scope>
    <source>
        <strain>CIAT 652</strain>
    </source>
</reference>
<feature type="chain" id="PRO_1000143290" description="Small ribosomal subunit protein uS17">
    <location>
        <begin position="1"/>
        <end position="79"/>
    </location>
</feature>